<proteinExistence type="inferred from homology"/>
<evidence type="ECO:0000255" key="1">
    <source>
        <dbReference type="HAMAP-Rule" id="MF_00368"/>
    </source>
</evidence>
<evidence type="ECO:0000305" key="2"/>
<keyword id="KW-1185">Reference proteome</keyword>
<keyword id="KW-0687">Ribonucleoprotein</keyword>
<keyword id="KW-0689">Ribosomal protein</keyword>
<organism>
    <name type="scientific">Chlorobaculum tepidum (strain ATCC 49652 / DSM 12025 / NBRC 103806 / TLS)</name>
    <name type="common">Chlorobium tepidum</name>
    <dbReference type="NCBI Taxonomy" id="194439"/>
    <lineage>
        <taxon>Bacteria</taxon>
        <taxon>Pseudomonadati</taxon>
        <taxon>Chlorobiota</taxon>
        <taxon>Chlorobiia</taxon>
        <taxon>Chlorobiales</taxon>
        <taxon>Chlorobiaceae</taxon>
        <taxon>Chlorobaculum</taxon>
    </lineage>
</organism>
<dbReference type="EMBL" id="AE006470">
    <property type="protein sequence ID" value="AAM71402.1"/>
    <property type="molecule type" value="Genomic_DNA"/>
</dbReference>
<dbReference type="RefSeq" id="NP_661060.1">
    <property type="nucleotide sequence ID" value="NC_002932.3"/>
</dbReference>
<dbReference type="RefSeq" id="WP_010931848.1">
    <property type="nucleotide sequence ID" value="NC_002932.3"/>
</dbReference>
<dbReference type="SMR" id="Q8KG16"/>
<dbReference type="STRING" id="194439.CT0154"/>
<dbReference type="EnsemblBacteria" id="AAM71402">
    <property type="protein sequence ID" value="AAM71402"/>
    <property type="gene ID" value="CT0154"/>
</dbReference>
<dbReference type="KEGG" id="cte:CT0154"/>
<dbReference type="PATRIC" id="fig|194439.7.peg.151"/>
<dbReference type="eggNOG" id="COG0222">
    <property type="taxonomic scope" value="Bacteria"/>
</dbReference>
<dbReference type="HOGENOM" id="CLU_086499_3_2_10"/>
<dbReference type="OrthoDB" id="9811748at2"/>
<dbReference type="Proteomes" id="UP000001007">
    <property type="component" value="Chromosome"/>
</dbReference>
<dbReference type="GO" id="GO:0022625">
    <property type="term" value="C:cytosolic large ribosomal subunit"/>
    <property type="evidence" value="ECO:0007669"/>
    <property type="project" value="TreeGrafter"/>
</dbReference>
<dbReference type="GO" id="GO:0003729">
    <property type="term" value="F:mRNA binding"/>
    <property type="evidence" value="ECO:0007669"/>
    <property type="project" value="TreeGrafter"/>
</dbReference>
<dbReference type="GO" id="GO:0003735">
    <property type="term" value="F:structural constituent of ribosome"/>
    <property type="evidence" value="ECO:0007669"/>
    <property type="project" value="InterPro"/>
</dbReference>
<dbReference type="GO" id="GO:0006412">
    <property type="term" value="P:translation"/>
    <property type="evidence" value="ECO:0007669"/>
    <property type="project" value="UniProtKB-UniRule"/>
</dbReference>
<dbReference type="CDD" id="cd00387">
    <property type="entry name" value="Ribosomal_L7_L12"/>
    <property type="match status" value="1"/>
</dbReference>
<dbReference type="FunFam" id="3.30.1390.10:FF:000001">
    <property type="entry name" value="50S ribosomal protein L7/L12"/>
    <property type="match status" value="1"/>
</dbReference>
<dbReference type="Gene3D" id="3.30.1390.10">
    <property type="match status" value="1"/>
</dbReference>
<dbReference type="Gene3D" id="1.20.5.710">
    <property type="entry name" value="Single helix bin"/>
    <property type="match status" value="1"/>
</dbReference>
<dbReference type="HAMAP" id="MF_00368">
    <property type="entry name" value="Ribosomal_bL12"/>
    <property type="match status" value="1"/>
</dbReference>
<dbReference type="InterPro" id="IPR000206">
    <property type="entry name" value="Ribosomal_bL12"/>
</dbReference>
<dbReference type="InterPro" id="IPR013823">
    <property type="entry name" value="Ribosomal_bL12_C"/>
</dbReference>
<dbReference type="InterPro" id="IPR014719">
    <property type="entry name" value="Ribosomal_bL12_C/ClpS-like"/>
</dbReference>
<dbReference type="InterPro" id="IPR008932">
    <property type="entry name" value="Ribosomal_bL12_oligo"/>
</dbReference>
<dbReference type="InterPro" id="IPR036235">
    <property type="entry name" value="Ribosomal_bL12_oligo_N_sf"/>
</dbReference>
<dbReference type="NCBIfam" id="TIGR00855">
    <property type="entry name" value="L12"/>
    <property type="match status" value="1"/>
</dbReference>
<dbReference type="PANTHER" id="PTHR45987">
    <property type="entry name" value="39S RIBOSOMAL PROTEIN L12"/>
    <property type="match status" value="1"/>
</dbReference>
<dbReference type="PANTHER" id="PTHR45987:SF4">
    <property type="entry name" value="LARGE RIBOSOMAL SUBUNIT PROTEIN BL12M"/>
    <property type="match status" value="1"/>
</dbReference>
<dbReference type="Pfam" id="PF00542">
    <property type="entry name" value="Ribosomal_L12"/>
    <property type="match status" value="1"/>
</dbReference>
<dbReference type="Pfam" id="PF16320">
    <property type="entry name" value="Ribosomal_L12_N"/>
    <property type="match status" value="1"/>
</dbReference>
<dbReference type="SUPFAM" id="SSF54736">
    <property type="entry name" value="ClpS-like"/>
    <property type="match status" value="1"/>
</dbReference>
<dbReference type="SUPFAM" id="SSF48300">
    <property type="entry name" value="Ribosomal protein L7/12, oligomerisation (N-terminal) domain"/>
    <property type="match status" value="1"/>
</dbReference>
<sequence>MSSIETLVEEIGKLTLTEASELVKALEEKFGVSAAPAVMAGAVMAAPAGEAAAAEEKTEFDVVLKSAGANKINVIKVVRAITGLGLKEAKDMVDGAPKTVKEAVSKDEAEKIAKELKDAGAEVELN</sequence>
<name>RL7_CHLTE</name>
<gene>
    <name evidence="1" type="primary">rplL</name>
    <name type="ordered locus">CT0154</name>
</gene>
<comment type="function">
    <text evidence="1">Forms part of the ribosomal stalk which helps the ribosome interact with GTP-bound translation factors. Is thus essential for accurate translation.</text>
</comment>
<comment type="subunit">
    <text evidence="1">Homodimer. Part of the ribosomal stalk of the 50S ribosomal subunit. Forms a multimeric L10(L12)X complex, where L10 forms an elongated spine to which 2 to 4 L12 dimers bind in a sequential fashion. Binds GTP-bound translation factors.</text>
</comment>
<comment type="similarity">
    <text evidence="1">Belongs to the bacterial ribosomal protein bL12 family.</text>
</comment>
<feature type="chain" id="PRO_0000157519" description="Large ribosomal subunit protein bL12">
    <location>
        <begin position="1"/>
        <end position="126"/>
    </location>
</feature>
<protein>
    <recommendedName>
        <fullName evidence="1">Large ribosomal subunit protein bL12</fullName>
    </recommendedName>
    <alternativeName>
        <fullName evidence="2">50S ribosomal protein L7/L12</fullName>
    </alternativeName>
</protein>
<accession>Q8KG16</accession>
<reference key="1">
    <citation type="journal article" date="2002" name="Proc. Natl. Acad. Sci. U.S.A.">
        <title>The complete genome sequence of Chlorobium tepidum TLS, a photosynthetic, anaerobic, green-sulfur bacterium.</title>
        <authorList>
            <person name="Eisen J.A."/>
            <person name="Nelson K.E."/>
            <person name="Paulsen I.T."/>
            <person name="Heidelberg J.F."/>
            <person name="Wu M."/>
            <person name="Dodson R.J."/>
            <person name="DeBoy R.T."/>
            <person name="Gwinn M.L."/>
            <person name="Nelson W.C."/>
            <person name="Haft D.H."/>
            <person name="Hickey E.K."/>
            <person name="Peterson J.D."/>
            <person name="Durkin A.S."/>
            <person name="Kolonay J.F."/>
            <person name="Yang F."/>
            <person name="Holt I.E."/>
            <person name="Umayam L.A."/>
            <person name="Mason T.M."/>
            <person name="Brenner M."/>
            <person name="Shea T.P."/>
            <person name="Parksey D.S."/>
            <person name="Nierman W.C."/>
            <person name="Feldblyum T.V."/>
            <person name="Hansen C.L."/>
            <person name="Craven M.B."/>
            <person name="Radune D."/>
            <person name="Vamathevan J.J."/>
            <person name="Khouri H.M."/>
            <person name="White O."/>
            <person name="Gruber T.M."/>
            <person name="Ketchum K.A."/>
            <person name="Venter J.C."/>
            <person name="Tettelin H."/>
            <person name="Bryant D.A."/>
            <person name="Fraser C.M."/>
        </authorList>
    </citation>
    <scope>NUCLEOTIDE SEQUENCE [LARGE SCALE GENOMIC DNA]</scope>
    <source>
        <strain>ATCC 49652 / DSM 12025 / NBRC 103806 / TLS</strain>
    </source>
</reference>